<accession>Q321S2</accession>
<gene>
    <name evidence="1" type="primary">yeaH</name>
    <name type="ordered locus">SBO_1309</name>
</gene>
<sequence length="427" mass="49450">MTWFIDRRLNGKNKSMVNRQRFLRRYKAQIKQSISEAINKRSVTDVDSGESVSIPTEDISEPMFHQGRGGLRHRVHPGNDHFVQNDRIERPQGGGGGSGSGQGQASQDGEGQDEFVFQISKDEYLDLLFEDLALPNLKQNQQRQLTEYKTHRAGYTANGVPANISVVRSLQNSLARRTAMTAGKRRELHALEENLAIISNSEPAQLLEEERLRKEIAELRAKIERVPFIDTFDLRYKNYEKRPDPSSQAVMFCLMDVSGSMDQSTKDMAKRFYILLYLFLSRTYKNVEVVYIRHHTQAKEVDEHEFFYSQETGGTIVSSALKLMDEVVKERYNPAQWNIYAAQASDGDNWADDSPLCHEILAKKLLPVVRYYSYIEITRRAHQTLWREYEHLQSTFDNFAMQHIRDQDDIYPVFRELFHKQNATAKD</sequence>
<feature type="chain" id="PRO_1000066882" description="UPF0229 protein YeaH">
    <location>
        <begin position="1"/>
        <end position="427"/>
    </location>
</feature>
<feature type="region of interest" description="Disordered" evidence="2">
    <location>
        <begin position="79"/>
        <end position="110"/>
    </location>
</feature>
<feature type="compositionally biased region" description="Basic and acidic residues" evidence="2">
    <location>
        <begin position="79"/>
        <end position="90"/>
    </location>
</feature>
<feature type="compositionally biased region" description="Gly residues" evidence="2">
    <location>
        <begin position="92"/>
        <end position="102"/>
    </location>
</feature>
<protein>
    <recommendedName>
        <fullName evidence="1">UPF0229 protein YeaH</fullName>
    </recommendedName>
</protein>
<proteinExistence type="inferred from homology"/>
<dbReference type="EMBL" id="CP000036">
    <property type="protein sequence ID" value="ABB65936.1"/>
    <property type="molecule type" value="Genomic_DNA"/>
</dbReference>
<dbReference type="RefSeq" id="WP_000219686.1">
    <property type="nucleotide sequence ID" value="NC_007613.1"/>
</dbReference>
<dbReference type="SMR" id="Q321S2"/>
<dbReference type="KEGG" id="sbo:SBO_1309"/>
<dbReference type="HOGENOM" id="CLU_049702_0_0_6"/>
<dbReference type="Proteomes" id="UP000007067">
    <property type="component" value="Chromosome"/>
</dbReference>
<dbReference type="HAMAP" id="MF_01232">
    <property type="entry name" value="UPF0229"/>
    <property type="match status" value="1"/>
</dbReference>
<dbReference type="InterPro" id="IPR006698">
    <property type="entry name" value="UPF0229"/>
</dbReference>
<dbReference type="NCBIfam" id="NF003707">
    <property type="entry name" value="PRK05325.1-2"/>
    <property type="match status" value="1"/>
</dbReference>
<dbReference type="NCBIfam" id="NF003708">
    <property type="entry name" value="PRK05325.1-3"/>
    <property type="match status" value="1"/>
</dbReference>
<dbReference type="PANTHER" id="PTHR30510">
    <property type="entry name" value="UPF0229 PROTEIN YEAH"/>
    <property type="match status" value="1"/>
</dbReference>
<dbReference type="PANTHER" id="PTHR30510:SF2">
    <property type="entry name" value="UPF0229 PROTEIN YEAH"/>
    <property type="match status" value="1"/>
</dbReference>
<dbReference type="Pfam" id="PF04285">
    <property type="entry name" value="DUF444"/>
    <property type="match status" value="1"/>
</dbReference>
<evidence type="ECO:0000255" key="1">
    <source>
        <dbReference type="HAMAP-Rule" id="MF_01232"/>
    </source>
</evidence>
<evidence type="ECO:0000256" key="2">
    <source>
        <dbReference type="SAM" id="MobiDB-lite"/>
    </source>
</evidence>
<organism>
    <name type="scientific">Shigella boydii serotype 4 (strain Sb227)</name>
    <dbReference type="NCBI Taxonomy" id="300268"/>
    <lineage>
        <taxon>Bacteria</taxon>
        <taxon>Pseudomonadati</taxon>
        <taxon>Pseudomonadota</taxon>
        <taxon>Gammaproteobacteria</taxon>
        <taxon>Enterobacterales</taxon>
        <taxon>Enterobacteriaceae</taxon>
        <taxon>Shigella</taxon>
    </lineage>
</organism>
<comment type="similarity">
    <text evidence="1">Belongs to the UPF0229 family.</text>
</comment>
<name>YEAH_SHIBS</name>
<reference key="1">
    <citation type="journal article" date="2005" name="Nucleic Acids Res.">
        <title>Genome dynamics and diversity of Shigella species, the etiologic agents of bacillary dysentery.</title>
        <authorList>
            <person name="Yang F."/>
            <person name="Yang J."/>
            <person name="Zhang X."/>
            <person name="Chen L."/>
            <person name="Jiang Y."/>
            <person name="Yan Y."/>
            <person name="Tang X."/>
            <person name="Wang J."/>
            <person name="Xiong Z."/>
            <person name="Dong J."/>
            <person name="Xue Y."/>
            <person name="Zhu Y."/>
            <person name="Xu X."/>
            <person name="Sun L."/>
            <person name="Chen S."/>
            <person name="Nie H."/>
            <person name="Peng J."/>
            <person name="Xu J."/>
            <person name="Wang Y."/>
            <person name="Yuan Z."/>
            <person name="Wen Y."/>
            <person name="Yao Z."/>
            <person name="Shen Y."/>
            <person name="Qiang B."/>
            <person name="Hou Y."/>
            <person name="Yu J."/>
            <person name="Jin Q."/>
        </authorList>
    </citation>
    <scope>NUCLEOTIDE SEQUENCE [LARGE SCALE GENOMIC DNA]</scope>
    <source>
        <strain>Sb227</strain>
    </source>
</reference>